<keyword id="KW-0067">ATP-binding</keyword>
<keyword id="KW-0143">Chaperone</keyword>
<keyword id="KW-0547">Nucleotide-binding</keyword>
<keyword id="KW-0597">Phosphoprotein</keyword>
<keyword id="KW-0346">Stress response</keyword>
<name>DNAK_METRJ</name>
<protein>
    <recommendedName>
        <fullName evidence="1">Chaperone protein DnaK</fullName>
    </recommendedName>
    <alternativeName>
        <fullName evidence="1">HSP70</fullName>
    </alternativeName>
    <alternativeName>
        <fullName evidence="1">Heat shock 70 kDa protein</fullName>
    </alternativeName>
    <alternativeName>
        <fullName evidence="1">Heat shock protein 70</fullName>
    </alternativeName>
</protein>
<feature type="chain" id="PRO_1000119730" description="Chaperone protein DnaK">
    <location>
        <begin position="1"/>
        <end position="638"/>
    </location>
</feature>
<feature type="region of interest" description="Disordered" evidence="2">
    <location>
        <begin position="602"/>
        <end position="638"/>
    </location>
</feature>
<feature type="compositionally biased region" description="Low complexity" evidence="2">
    <location>
        <begin position="602"/>
        <end position="613"/>
    </location>
</feature>
<feature type="compositionally biased region" description="Acidic residues" evidence="2">
    <location>
        <begin position="622"/>
        <end position="631"/>
    </location>
</feature>
<feature type="modified residue" description="Phosphothreonine; by autocatalysis" evidence="1">
    <location>
        <position position="198"/>
    </location>
</feature>
<evidence type="ECO:0000255" key="1">
    <source>
        <dbReference type="HAMAP-Rule" id="MF_00332"/>
    </source>
</evidence>
<evidence type="ECO:0000256" key="2">
    <source>
        <dbReference type="SAM" id="MobiDB-lite"/>
    </source>
</evidence>
<proteinExistence type="inferred from homology"/>
<gene>
    <name evidence="1" type="primary">dnaK</name>
    <name type="ordered locus">Mrad2831_3919</name>
</gene>
<accession>B1LZ51</accession>
<organism>
    <name type="scientific">Methylobacterium radiotolerans (strain ATCC 27329 / DSM 1819 / JCM 2831 / NBRC 15690 / NCIMB 10815 / 0-1)</name>
    <dbReference type="NCBI Taxonomy" id="426355"/>
    <lineage>
        <taxon>Bacteria</taxon>
        <taxon>Pseudomonadati</taxon>
        <taxon>Pseudomonadota</taxon>
        <taxon>Alphaproteobacteria</taxon>
        <taxon>Hyphomicrobiales</taxon>
        <taxon>Methylobacteriaceae</taxon>
        <taxon>Methylobacterium</taxon>
    </lineage>
</organism>
<reference key="1">
    <citation type="submission" date="2008-03" db="EMBL/GenBank/DDBJ databases">
        <title>Complete sequence of chromosome of Methylobacterium radiotolerans JCM 2831.</title>
        <authorList>
            <consortium name="US DOE Joint Genome Institute"/>
            <person name="Copeland A."/>
            <person name="Lucas S."/>
            <person name="Lapidus A."/>
            <person name="Glavina del Rio T."/>
            <person name="Dalin E."/>
            <person name="Tice H."/>
            <person name="Bruce D."/>
            <person name="Goodwin L."/>
            <person name="Pitluck S."/>
            <person name="Kiss H."/>
            <person name="Brettin T."/>
            <person name="Detter J.C."/>
            <person name="Han C."/>
            <person name="Kuske C.R."/>
            <person name="Schmutz J."/>
            <person name="Larimer F."/>
            <person name="Land M."/>
            <person name="Hauser L."/>
            <person name="Kyrpides N."/>
            <person name="Mikhailova N."/>
            <person name="Marx C.J."/>
            <person name="Richardson P."/>
        </authorList>
    </citation>
    <scope>NUCLEOTIDE SEQUENCE [LARGE SCALE GENOMIC DNA]</scope>
    <source>
        <strain>ATCC 27329 / DSM 1819 / JCM 2831 / NBRC 15690 / NCIMB 10815 / 0-1</strain>
    </source>
</reference>
<dbReference type="EMBL" id="CP001001">
    <property type="protein sequence ID" value="ACB25893.1"/>
    <property type="molecule type" value="Genomic_DNA"/>
</dbReference>
<dbReference type="RefSeq" id="WP_012320850.1">
    <property type="nucleotide sequence ID" value="NC_010505.1"/>
</dbReference>
<dbReference type="SMR" id="B1LZ51"/>
<dbReference type="STRING" id="426355.Mrad2831_3919"/>
<dbReference type="GeneID" id="6139974"/>
<dbReference type="KEGG" id="mrd:Mrad2831_3919"/>
<dbReference type="eggNOG" id="COG0443">
    <property type="taxonomic scope" value="Bacteria"/>
</dbReference>
<dbReference type="HOGENOM" id="CLU_005965_2_1_5"/>
<dbReference type="OrthoDB" id="9766019at2"/>
<dbReference type="Proteomes" id="UP000006589">
    <property type="component" value="Chromosome"/>
</dbReference>
<dbReference type="GO" id="GO:0005524">
    <property type="term" value="F:ATP binding"/>
    <property type="evidence" value="ECO:0007669"/>
    <property type="project" value="UniProtKB-UniRule"/>
</dbReference>
<dbReference type="GO" id="GO:0140662">
    <property type="term" value="F:ATP-dependent protein folding chaperone"/>
    <property type="evidence" value="ECO:0007669"/>
    <property type="project" value="InterPro"/>
</dbReference>
<dbReference type="GO" id="GO:0051082">
    <property type="term" value="F:unfolded protein binding"/>
    <property type="evidence" value="ECO:0007669"/>
    <property type="project" value="InterPro"/>
</dbReference>
<dbReference type="CDD" id="cd11733">
    <property type="entry name" value="ASKHA_NBD_HSP70_HSPA9"/>
    <property type="match status" value="1"/>
</dbReference>
<dbReference type="FunFam" id="2.60.34.10:FF:000014">
    <property type="entry name" value="Chaperone protein DnaK HSP70"/>
    <property type="match status" value="1"/>
</dbReference>
<dbReference type="FunFam" id="3.30.420.40:FF:000020">
    <property type="entry name" value="Chaperone protein HscA homolog"/>
    <property type="match status" value="1"/>
</dbReference>
<dbReference type="FunFam" id="3.30.30.30:FF:000003">
    <property type="entry name" value="Heat shock protein 9"/>
    <property type="match status" value="1"/>
</dbReference>
<dbReference type="FunFam" id="1.20.1270.10:FF:000001">
    <property type="entry name" value="Molecular chaperone DnaK"/>
    <property type="match status" value="1"/>
</dbReference>
<dbReference type="FunFam" id="3.30.420.40:FF:000004">
    <property type="entry name" value="Molecular chaperone DnaK"/>
    <property type="match status" value="1"/>
</dbReference>
<dbReference type="FunFam" id="3.90.640.10:FF:000003">
    <property type="entry name" value="Molecular chaperone DnaK"/>
    <property type="match status" value="1"/>
</dbReference>
<dbReference type="Gene3D" id="1.20.1270.10">
    <property type="match status" value="1"/>
</dbReference>
<dbReference type="Gene3D" id="3.30.420.40">
    <property type="match status" value="2"/>
</dbReference>
<dbReference type="Gene3D" id="3.90.640.10">
    <property type="entry name" value="Actin, Chain A, domain 4"/>
    <property type="match status" value="1"/>
</dbReference>
<dbReference type="Gene3D" id="2.60.34.10">
    <property type="entry name" value="Substrate Binding Domain Of DNAk, Chain A, domain 1"/>
    <property type="match status" value="1"/>
</dbReference>
<dbReference type="HAMAP" id="MF_00332">
    <property type="entry name" value="DnaK"/>
    <property type="match status" value="1"/>
</dbReference>
<dbReference type="InterPro" id="IPR043129">
    <property type="entry name" value="ATPase_NBD"/>
</dbReference>
<dbReference type="InterPro" id="IPR012725">
    <property type="entry name" value="Chaperone_DnaK"/>
</dbReference>
<dbReference type="InterPro" id="IPR018181">
    <property type="entry name" value="Heat_shock_70_CS"/>
</dbReference>
<dbReference type="InterPro" id="IPR029048">
    <property type="entry name" value="HSP70_C_sf"/>
</dbReference>
<dbReference type="InterPro" id="IPR029047">
    <property type="entry name" value="HSP70_peptide-bd_sf"/>
</dbReference>
<dbReference type="InterPro" id="IPR013126">
    <property type="entry name" value="Hsp_70_fam"/>
</dbReference>
<dbReference type="NCBIfam" id="NF001413">
    <property type="entry name" value="PRK00290.1"/>
    <property type="match status" value="1"/>
</dbReference>
<dbReference type="NCBIfam" id="NF003520">
    <property type="entry name" value="PRK05183.1"/>
    <property type="match status" value="1"/>
</dbReference>
<dbReference type="NCBIfam" id="TIGR02350">
    <property type="entry name" value="prok_dnaK"/>
    <property type="match status" value="1"/>
</dbReference>
<dbReference type="PANTHER" id="PTHR19375">
    <property type="entry name" value="HEAT SHOCK PROTEIN 70KDA"/>
    <property type="match status" value="1"/>
</dbReference>
<dbReference type="Pfam" id="PF00012">
    <property type="entry name" value="HSP70"/>
    <property type="match status" value="1"/>
</dbReference>
<dbReference type="PRINTS" id="PR00301">
    <property type="entry name" value="HEATSHOCK70"/>
</dbReference>
<dbReference type="SUPFAM" id="SSF53067">
    <property type="entry name" value="Actin-like ATPase domain"/>
    <property type="match status" value="2"/>
</dbReference>
<dbReference type="SUPFAM" id="SSF100934">
    <property type="entry name" value="Heat shock protein 70kD (HSP70), C-terminal subdomain"/>
    <property type="match status" value="1"/>
</dbReference>
<dbReference type="SUPFAM" id="SSF100920">
    <property type="entry name" value="Heat shock protein 70kD (HSP70), peptide-binding domain"/>
    <property type="match status" value="1"/>
</dbReference>
<dbReference type="PROSITE" id="PS00297">
    <property type="entry name" value="HSP70_1"/>
    <property type="match status" value="1"/>
</dbReference>
<dbReference type="PROSITE" id="PS00329">
    <property type="entry name" value="HSP70_2"/>
    <property type="match status" value="1"/>
</dbReference>
<comment type="function">
    <text evidence="1">Acts as a chaperone.</text>
</comment>
<comment type="induction">
    <text evidence="1">By stress conditions e.g. heat shock.</text>
</comment>
<comment type="similarity">
    <text evidence="1">Belongs to the heat shock protein 70 family.</text>
</comment>
<sequence>MGKVIGIDLGTTNSCVAVMEGTQPKVIENSEGARTTPSIVAFTDDGERLVGQPAKRQAVTNPERTFFAIKRLIGRTYDDPMTQKDKGLVPYKIARGDNGDAWVEADGKKYSPSQISAFTLQKMKETAESHLGQPVTQAVITVPAYFNDAQRQATKDAGKIAGLEVLRIINEPTAAALAYGLDKKKSGTIAVYDLGGGTFDVSILEIGDGVFEVKSTNGDTFLGGEDFDNRIVEYLTAEFKKEQGIDLTKDKLALQRLKEAAEKAKIELSSATQTEINLPYITADNTGPKHLALKLSRAKFESLVDDLVQRTIEPCRKALKDAGVSASEIDEVVLVGGMIRMPKIQEVVKSFFGKEPHKGVNPDEVVAIGAAVQAGVLQGDVKDVLLLDVTPLSLGIETLGGVFTRLIDRNTTIPTKKSQTFSTAEDNQNAVTIRVFQGEREMAADNKLLGQFDLVGIPPAPRGMPQIEVTFDIDANGIVNVTAKDKATNKEHQIRIQASGGLSDADIDRMVKDAEANAEADKKRRELVEVKNQGESLIHATEKSVTEYGDKVPAADKGAIETAMTALKTALEGDDVEAIKARTTDLMQASMKLGEAMYAANQAAGPDAGAEAAASEKKDDVIDADFQEVDEKDQKKRA</sequence>